<sequence length="316" mass="35112">MTASFQHISVLLNESIEGLAIKPDGIYIDGTFGRGGHSRTILAQLGPEGRLYSIDRDPQAIAEAQKIDDPRFTIVHGPFSGIAEYAQRYDLVGKVDGVLFDLGVSSPQLDDAERGFSFMKDGPLDMRMDPTSGMPVSAWLAQADLDDITWVIREFGEDKHARRIAKAIVEYRENELNEPLTRTSQLAKLISDAAPKSFKEKKHPATRAFQAFRIYINSELEEIDTALRGASDILAPQGRLSVISFHSLEDRMVKRFMRKESQGPQVPHGIPLTQDQIRALGSAKMKTVGKALKPSDQEVELNPRSRSSVLRVAEKL</sequence>
<dbReference type="EC" id="2.1.1.199" evidence="1"/>
<dbReference type="EMBL" id="AE003852">
    <property type="protein sequence ID" value="AAF95552.1"/>
    <property type="molecule type" value="Genomic_DNA"/>
</dbReference>
<dbReference type="PIR" id="E82082">
    <property type="entry name" value="E82082"/>
</dbReference>
<dbReference type="RefSeq" id="NP_232039.1">
    <property type="nucleotide sequence ID" value="NC_002505.1"/>
</dbReference>
<dbReference type="RefSeq" id="WP_000127221.1">
    <property type="nucleotide sequence ID" value="NZ_LT906614.1"/>
</dbReference>
<dbReference type="SMR" id="Q9KPF9"/>
<dbReference type="STRING" id="243277.VC_2409"/>
<dbReference type="DNASU" id="2613078"/>
<dbReference type="EnsemblBacteria" id="AAF95552">
    <property type="protein sequence ID" value="AAF95552"/>
    <property type="gene ID" value="VC_2409"/>
</dbReference>
<dbReference type="KEGG" id="vch:VC_2409"/>
<dbReference type="PATRIC" id="fig|243277.26.peg.2294"/>
<dbReference type="eggNOG" id="COG0275">
    <property type="taxonomic scope" value="Bacteria"/>
</dbReference>
<dbReference type="HOGENOM" id="CLU_038422_2_0_6"/>
<dbReference type="Proteomes" id="UP000000584">
    <property type="component" value="Chromosome 1"/>
</dbReference>
<dbReference type="GO" id="GO:0005737">
    <property type="term" value="C:cytoplasm"/>
    <property type="evidence" value="ECO:0000318"/>
    <property type="project" value="GO_Central"/>
</dbReference>
<dbReference type="GO" id="GO:0071424">
    <property type="term" value="F:rRNA (cytosine-N4-)-methyltransferase activity"/>
    <property type="evidence" value="ECO:0000318"/>
    <property type="project" value="GO_Central"/>
</dbReference>
<dbReference type="GO" id="GO:0070475">
    <property type="term" value="P:rRNA base methylation"/>
    <property type="evidence" value="ECO:0000318"/>
    <property type="project" value="GO_Central"/>
</dbReference>
<dbReference type="FunFam" id="1.10.150.170:FF:000001">
    <property type="entry name" value="Ribosomal RNA small subunit methyltransferase H"/>
    <property type="match status" value="1"/>
</dbReference>
<dbReference type="Gene3D" id="1.10.150.170">
    <property type="entry name" value="Putative methyltransferase TM0872, insert domain"/>
    <property type="match status" value="1"/>
</dbReference>
<dbReference type="Gene3D" id="3.40.50.150">
    <property type="entry name" value="Vaccinia Virus protein VP39"/>
    <property type="match status" value="1"/>
</dbReference>
<dbReference type="HAMAP" id="MF_01007">
    <property type="entry name" value="16SrRNA_methyltr_H"/>
    <property type="match status" value="1"/>
</dbReference>
<dbReference type="InterPro" id="IPR002903">
    <property type="entry name" value="RsmH"/>
</dbReference>
<dbReference type="InterPro" id="IPR023397">
    <property type="entry name" value="SAM-dep_MeTrfase_MraW_recog"/>
</dbReference>
<dbReference type="InterPro" id="IPR029063">
    <property type="entry name" value="SAM-dependent_MTases_sf"/>
</dbReference>
<dbReference type="NCBIfam" id="TIGR00006">
    <property type="entry name" value="16S rRNA (cytosine(1402)-N(4))-methyltransferase RsmH"/>
    <property type="match status" value="1"/>
</dbReference>
<dbReference type="PANTHER" id="PTHR11265:SF0">
    <property type="entry name" value="12S RRNA N4-METHYLCYTIDINE METHYLTRANSFERASE"/>
    <property type="match status" value="1"/>
</dbReference>
<dbReference type="PANTHER" id="PTHR11265">
    <property type="entry name" value="S-ADENOSYL-METHYLTRANSFERASE MRAW"/>
    <property type="match status" value="1"/>
</dbReference>
<dbReference type="Pfam" id="PF01795">
    <property type="entry name" value="Methyltransf_5"/>
    <property type="match status" value="1"/>
</dbReference>
<dbReference type="PIRSF" id="PIRSF004486">
    <property type="entry name" value="MraW"/>
    <property type="match status" value="1"/>
</dbReference>
<dbReference type="SUPFAM" id="SSF81799">
    <property type="entry name" value="Putative methyltransferase TM0872, insert domain"/>
    <property type="match status" value="1"/>
</dbReference>
<dbReference type="SUPFAM" id="SSF53335">
    <property type="entry name" value="S-adenosyl-L-methionine-dependent methyltransferases"/>
    <property type="match status" value="1"/>
</dbReference>
<protein>
    <recommendedName>
        <fullName evidence="1">Ribosomal RNA small subunit methyltransferase H</fullName>
        <ecNumber evidence="1">2.1.1.199</ecNumber>
    </recommendedName>
    <alternativeName>
        <fullName evidence="1">16S rRNA m(4)C1402 methyltransferase</fullName>
    </alternativeName>
    <alternativeName>
        <fullName evidence="1">rRNA (cytosine-N(4)-)-methyltransferase RsmH</fullName>
    </alternativeName>
</protein>
<proteinExistence type="inferred from homology"/>
<name>RSMH_VIBCH</name>
<evidence type="ECO:0000255" key="1">
    <source>
        <dbReference type="HAMAP-Rule" id="MF_01007"/>
    </source>
</evidence>
<evidence type="ECO:0000256" key="2">
    <source>
        <dbReference type="SAM" id="MobiDB-lite"/>
    </source>
</evidence>
<reference key="1">
    <citation type="journal article" date="2000" name="Nature">
        <title>DNA sequence of both chromosomes of the cholera pathogen Vibrio cholerae.</title>
        <authorList>
            <person name="Heidelberg J.F."/>
            <person name="Eisen J.A."/>
            <person name="Nelson W.C."/>
            <person name="Clayton R.A."/>
            <person name="Gwinn M.L."/>
            <person name="Dodson R.J."/>
            <person name="Haft D.H."/>
            <person name="Hickey E.K."/>
            <person name="Peterson J.D."/>
            <person name="Umayam L.A."/>
            <person name="Gill S.R."/>
            <person name="Nelson K.E."/>
            <person name="Read T.D."/>
            <person name="Tettelin H."/>
            <person name="Richardson D.L."/>
            <person name="Ermolaeva M.D."/>
            <person name="Vamathevan J.J."/>
            <person name="Bass S."/>
            <person name="Qin H."/>
            <person name="Dragoi I."/>
            <person name="Sellers P."/>
            <person name="McDonald L.A."/>
            <person name="Utterback T.R."/>
            <person name="Fleischmann R.D."/>
            <person name="Nierman W.C."/>
            <person name="White O."/>
            <person name="Salzberg S.L."/>
            <person name="Smith H.O."/>
            <person name="Colwell R.R."/>
            <person name="Mekalanos J.J."/>
            <person name="Venter J.C."/>
            <person name="Fraser C.M."/>
        </authorList>
    </citation>
    <scope>NUCLEOTIDE SEQUENCE [LARGE SCALE GENOMIC DNA]</scope>
    <source>
        <strain>ATCC 39315 / El Tor Inaba N16961</strain>
    </source>
</reference>
<gene>
    <name evidence="1" type="primary">rsmH</name>
    <name type="synonym">mraW</name>
    <name type="ordered locus">VC_2409</name>
</gene>
<comment type="function">
    <text evidence="1">Specifically methylates the N4 position of cytidine in position 1402 (C1402) of 16S rRNA.</text>
</comment>
<comment type="catalytic activity">
    <reaction evidence="1">
        <text>cytidine(1402) in 16S rRNA + S-adenosyl-L-methionine = N(4)-methylcytidine(1402) in 16S rRNA + S-adenosyl-L-homocysteine + H(+)</text>
        <dbReference type="Rhea" id="RHEA:42928"/>
        <dbReference type="Rhea" id="RHEA-COMP:10286"/>
        <dbReference type="Rhea" id="RHEA-COMP:10287"/>
        <dbReference type="ChEBI" id="CHEBI:15378"/>
        <dbReference type="ChEBI" id="CHEBI:57856"/>
        <dbReference type="ChEBI" id="CHEBI:59789"/>
        <dbReference type="ChEBI" id="CHEBI:74506"/>
        <dbReference type="ChEBI" id="CHEBI:82748"/>
        <dbReference type="EC" id="2.1.1.199"/>
    </reaction>
</comment>
<comment type="subcellular location">
    <subcellularLocation>
        <location evidence="1">Cytoplasm</location>
    </subcellularLocation>
</comment>
<comment type="similarity">
    <text evidence="1">Belongs to the methyltransferase superfamily. RsmH family.</text>
</comment>
<feature type="chain" id="PRO_0000108741" description="Ribosomal RNA small subunit methyltransferase H">
    <location>
        <begin position="1"/>
        <end position="316"/>
    </location>
</feature>
<feature type="region of interest" description="Disordered" evidence="2">
    <location>
        <begin position="291"/>
        <end position="316"/>
    </location>
</feature>
<feature type="binding site" evidence="1">
    <location>
        <begin position="35"/>
        <end position="37"/>
    </location>
    <ligand>
        <name>S-adenosyl-L-methionine</name>
        <dbReference type="ChEBI" id="CHEBI:59789"/>
    </ligand>
</feature>
<feature type="binding site" evidence="1">
    <location>
        <position position="55"/>
    </location>
    <ligand>
        <name>S-adenosyl-L-methionine</name>
        <dbReference type="ChEBI" id="CHEBI:59789"/>
    </ligand>
</feature>
<feature type="binding site" evidence="1">
    <location>
        <position position="79"/>
    </location>
    <ligand>
        <name>S-adenosyl-L-methionine</name>
        <dbReference type="ChEBI" id="CHEBI:59789"/>
    </ligand>
</feature>
<feature type="binding site" evidence="1">
    <location>
        <position position="101"/>
    </location>
    <ligand>
        <name>S-adenosyl-L-methionine</name>
        <dbReference type="ChEBI" id="CHEBI:59789"/>
    </ligand>
</feature>
<feature type="binding site" evidence="1">
    <location>
        <position position="108"/>
    </location>
    <ligand>
        <name>S-adenosyl-L-methionine</name>
        <dbReference type="ChEBI" id="CHEBI:59789"/>
    </ligand>
</feature>
<organism>
    <name type="scientific">Vibrio cholerae serotype O1 (strain ATCC 39315 / El Tor Inaba N16961)</name>
    <dbReference type="NCBI Taxonomy" id="243277"/>
    <lineage>
        <taxon>Bacteria</taxon>
        <taxon>Pseudomonadati</taxon>
        <taxon>Pseudomonadota</taxon>
        <taxon>Gammaproteobacteria</taxon>
        <taxon>Vibrionales</taxon>
        <taxon>Vibrionaceae</taxon>
        <taxon>Vibrio</taxon>
    </lineage>
</organism>
<accession>Q9KPF9</accession>
<keyword id="KW-0963">Cytoplasm</keyword>
<keyword id="KW-0489">Methyltransferase</keyword>
<keyword id="KW-1185">Reference proteome</keyword>
<keyword id="KW-0698">rRNA processing</keyword>
<keyword id="KW-0949">S-adenosyl-L-methionine</keyword>
<keyword id="KW-0808">Transferase</keyword>